<evidence type="ECO:0000250" key="1">
    <source>
        <dbReference type="UniProtKB" id="P0A817"/>
    </source>
</evidence>
<evidence type="ECO:0000250" key="2">
    <source>
        <dbReference type="UniProtKB" id="P31153"/>
    </source>
</evidence>
<evidence type="ECO:0000269" key="3">
    <source>
    </source>
</evidence>
<evidence type="ECO:0000305" key="4"/>
<dbReference type="EC" id="2.5.1.6" evidence="2"/>
<dbReference type="EMBL" id="AB070266">
    <property type="protein sequence ID" value="BAD06937.1"/>
    <property type="molecule type" value="mRNA"/>
</dbReference>
<dbReference type="EMBL" id="AK166671">
    <property type="protein sequence ID" value="BAE38932.1"/>
    <property type="molecule type" value="mRNA"/>
</dbReference>
<dbReference type="EMBL" id="AK168155">
    <property type="protein sequence ID" value="BAE40120.1"/>
    <property type="molecule type" value="mRNA"/>
</dbReference>
<dbReference type="CCDS" id="CCDS39515.1"/>
<dbReference type="RefSeq" id="NP_663544.1">
    <property type="nucleotide sequence ID" value="NM_145569.5"/>
</dbReference>
<dbReference type="SMR" id="Q3THS6"/>
<dbReference type="BioGRID" id="231217">
    <property type="interactions" value="18"/>
</dbReference>
<dbReference type="DIP" id="DIP-59526N"/>
<dbReference type="FunCoup" id="Q3THS6">
    <property type="interactions" value="1985"/>
</dbReference>
<dbReference type="IntAct" id="Q3THS6">
    <property type="interactions" value="2"/>
</dbReference>
<dbReference type="STRING" id="10090.ENSMUSP00000087118"/>
<dbReference type="GlyGen" id="Q3THS6">
    <property type="glycosylation" value="1 site, 1 O-linked glycan (1 site)"/>
</dbReference>
<dbReference type="iPTMnet" id="Q3THS6"/>
<dbReference type="PhosphoSitePlus" id="Q3THS6"/>
<dbReference type="SwissPalm" id="Q3THS6"/>
<dbReference type="jPOST" id="Q3THS6"/>
<dbReference type="PaxDb" id="10090-ENSMUSP00000087118"/>
<dbReference type="PeptideAtlas" id="Q3THS6"/>
<dbReference type="ProteomicsDB" id="295726"/>
<dbReference type="Pumba" id="Q3THS6"/>
<dbReference type="Antibodypedia" id="31867">
    <property type="antibodies" value="370 antibodies from 32 providers"/>
</dbReference>
<dbReference type="DNASU" id="232087"/>
<dbReference type="Ensembl" id="ENSMUST00000059472.10">
    <property type="protein sequence ID" value="ENSMUSP00000087118.7"/>
    <property type="gene ID" value="ENSMUSG00000053907.11"/>
</dbReference>
<dbReference type="GeneID" id="232087"/>
<dbReference type="KEGG" id="mmu:232087"/>
<dbReference type="UCSC" id="uc009cip.1">
    <property type="organism name" value="mouse"/>
</dbReference>
<dbReference type="AGR" id="MGI:2443731"/>
<dbReference type="CTD" id="4144"/>
<dbReference type="MGI" id="MGI:2443731">
    <property type="gene designation" value="Mat2a"/>
</dbReference>
<dbReference type="VEuPathDB" id="HostDB:ENSMUSG00000053907"/>
<dbReference type="eggNOG" id="KOG1506">
    <property type="taxonomic scope" value="Eukaryota"/>
</dbReference>
<dbReference type="GeneTree" id="ENSGT00950000183185"/>
<dbReference type="HOGENOM" id="CLU_041802_0_1_1"/>
<dbReference type="InParanoid" id="Q3THS6"/>
<dbReference type="OMA" id="ASYMARY"/>
<dbReference type="OrthoDB" id="5852090at2759"/>
<dbReference type="PhylomeDB" id="Q3THS6"/>
<dbReference type="TreeFam" id="TF300511"/>
<dbReference type="Reactome" id="R-MMU-156581">
    <property type="pathway name" value="Methylation"/>
</dbReference>
<dbReference type="UniPathway" id="UPA00315">
    <property type="reaction ID" value="UER00080"/>
</dbReference>
<dbReference type="BioGRID-ORCS" id="232087">
    <property type="hits" value="25 hits in 79 CRISPR screens"/>
</dbReference>
<dbReference type="ChiTaRS" id="Mat2a">
    <property type="organism name" value="mouse"/>
</dbReference>
<dbReference type="PRO" id="PR:Q3THS6"/>
<dbReference type="Proteomes" id="UP000000589">
    <property type="component" value="Chromosome 6"/>
</dbReference>
<dbReference type="RNAct" id="Q3THS6">
    <property type="molecule type" value="protein"/>
</dbReference>
<dbReference type="Bgee" id="ENSMUSG00000053907">
    <property type="expression patterns" value="Expressed in embryonic post-anal tail and 67 other cell types or tissues"/>
</dbReference>
<dbReference type="ExpressionAtlas" id="Q3THS6">
    <property type="expression patterns" value="baseline and differential"/>
</dbReference>
<dbReference type="GO" id="GO:0048269">
    <property type="term" value="C:methionine adenosyltransferase complex"/>
    <property type="evidence" value="ECO:0000250"/>
    <property type="project" value="UniProtKB"/>
</dbReference>
<dbReference type="GO" id="GO:0005524">
    <property type="term" value="F:ATP binding"/>
    <property type="evidence" value="ECO:0007669"/>
    <property type="project" value="UniProtKB-KW"/>
</dbReference>
<dbReference type="GO" id="GO:0042802">
    <property type="term" value="F:identical protein binding"/>
    <property type="evidence" value="ECO:0007669"/>
    <property type="project" value="Ensembl"/>
</dbReference>
<dbReference type="GO" id="GO:0046872">
    <property type="term" value="F:metal ion binding"/>
    <property type="evidence" value="ECO:0007669"/>
    <property type="project" value="UniProtKB-KW"/>
</dbReference>
<dbReference type="GO" id="GO:0004478">
    <property type="term" value="F:methionine adenosyltransferase activity"/>
    <property type="evidence" value="ECO:0000314"/>
    <property type="project" value="MGI"/>
</dbReference>
<dbReference type="GO" id="GO:1990830">
    <property type="term" value="P:cellular response to leukemia inhibitory factor"/>
    <property type="evidence" value="ECO:0000270"/>
    <property type="project" value="MGI"/>
</dbReference>
<dbReference type="GO" id="GO:0061431">
    <property type="term" value="P:cellular response to methionine"/>
    <property type="evidence" value="ECO:0007669"/>
    <property type="project" value="Ensembl"/>
</dbReference>
<dbReference type="GO" id="GO:0006730">
    <property type="term" value="P:one-carbon metabolic process"/>
    <property type="evidence" value="ECO:0007669"/>
    <property type="project" value="UniProtKB-KW"/>
</dbReference>
<dbReference type="GO" id="GO:1904263">
    <property type="term" value="P:positive regulation of TORC1 signaling"/>
    <property type="evidence" value="ECO:0007669"/>
    <property type="project" value="Ensembl"/>
</dbReference>
<dbReference type="GO" id="GO:0051291">
    <property type="term" value="P:protein heterooligomerization"/>
    <property type="evidence" value="ECO:0000250"/>
    <property type="project" value="UniProtKB"/>
</dbReference>
<dbReference type="GO" id="GO:0034214">
    <property type="term" value="P:protein hexamerization"/>
    <property type="evidence" value="ECO:0000250"/>
    <property type="project" value="UniProtKB"/>
</dbReference>
<dbReference type="GO" id="GO:0006556">
    <property type="term" value="P:S-adenosylmethionine biosynthetic process"/>
    <property type="evidence" value="ECO:0000314"/>
    <property type="project" value="MGI"/>
</dbReference>
<dbReference type="CDD" id="cd18079">
    <property type="entry name" value="S-AdoMet_synt"/>
    <property type="match status" value="1"/>
</dbReference>
<dbReference type="FunFam" id="3.30.300.10:FF:000001">
    <property type="entry name" value="S-adenosylmethionine synthase"/>
    <property type="match status" value="1"/>
</dbReference>
<dbReference type="FunFam" id="3.30.300.10:FF:000003">
    <property type="entry name" value="S-adenosylmethionine synthase"/>
    <property type="match status" value="1"/>
</dbReference>
<dbReference type="FunFam" id="3.30.300.10:FF:000004">
    <property type="entry name" value="S-adenosylmethionine synthase"/>
    <property type="match status" value="1"/>
</dbReference>
<dbReference type="Gene3D" id="3.30.300.10">
    <property type="match status" value="3"/>
</dbReference>
<dbReference type="HAMAP" id="MF_00086">
    <property type="entry name" value="S_AdoMet_synth1"/>
    <property type="match status" value="1"/>
</dbReference>
<dbReference type="InterPro" id="IPR022631">
    <property type="entry name" value="ADOMET_SYNTHASE_CS"/>
</dbReference>
<dbReference type="InterPro" id="IPR022630">
    <property type="entry name" value="S-AdoMet_synt_C"/>
</dbReference>
<dbReference type="InterPro" id="IPR022629">
    <property type="entry name" value="S-AdoMet_synt_central"/>
</dbReference>
<dbReference type="InterPro" id="IPR022628">
    <property type="entry name" value="S-AdoMet_synt_N"/>
</dbReference>
<dbReference type="InterPro" id="IPR002133">
    <property type="entry name" value="S-AdoMet_synthetase"/>
</dbReference>
<dbReference type="InterPro" id="IPR022636">
    <property type="entry name" value="S-AdoMet_synthetase_sfam"/>
</dbReference>
<dbReference type="NCBIfam" id="TIGR01034">
    <property type="entry name" value="metK"/>
    <property type="match status" value="1"/>
</dbReference>
<dbReference type="PANTHER" id="PTHR11964">
    <property type="entry name" value="S-ADENOSYLMETHIONINE SYNTHETASE"/>
    <property type="match status" value="1"/>
</dbReference>
<dbReference type="Pfam" id="PF02773">
    <property type="entry name" value="S-AdoMet_synt_C"/>
    <property type="match status" value="1"/>
</dbReference>
<dbReference type="Pfam" id="PF02772">
    <property type="entry name" value="S-AdoMet_synt_M"/>
    <property type="match status" value="1"/>
</dbReference>
<dbReference type="Pfam" id="PF00438">
    <property type="entry name" value="S-AdoMet_synt_N"/>
    <property type="match status" value="1"/>
</dbReference>
<dbReference type="PIRSF" id="PIRSF000497">
    <property type="entry name" value="MAT"/>
    <property type="match status" value="1"/>
</dbReference>
<dbReference type="SUPFAM" id="SSF55973">
    <property type="entry name" value="S-adenosylmethionine synthetase"/>
    <property type="match status" value="3"/>
</dbReference>
<dbReference type="PROSITE" id="PS00376">
    <property type="entry name" value="ADOMET_SYNTHASE_1"/>
    <property type="match status" value="1"/>
</dbReference>
<dbReference type="PROSITE" id="PS00377">
    <property type="entry name" value="ADOMET_SYNTHASE_2"/>
    <property type="match status" value="1"/>
</dbReference>
<keyword id="KW-0007">Acetylation</keyword>
<keyword id="KW-0067">ATP-binding</keyword>
<keyword id="KW-1017">Isopeptide bond</keyword>
<keyword id="KW-0460">Magnesium</keyword>
<keyword id="KW-0479">Metal-binding</keyword>
<keyword id="KW-0547">Nucleotide-binding</keyword>
<keyword id="KW-0554">One-carbon metabolism</keyword>
<keyword id="KW-0597">Phosphoprotein</keyword>
<keyword id="KW-0630">Potassium</keyword>
<keyword id="KW-1185">Reference proteome</keyword>
<keyword id="KW-0808">Transferase</keyword>
<keyword id="KW-0832">Ubl conjugation</keyword>
<organism>
    <name type="scientific">Mus musculus</name>
    <name type="common">Mouse</name>
    <dbReference type="NCBI Taxonomy" id="10090"/>
    <lineage>
        <taxon>Eukaryota</taxon>
        <taxon>Metazoa</taxon>
        <taxon>Chordata</taxon>
        <taxon>Craniata</taxon>
        <taxon>Vertebrata</taxon>
        <taxon>Euteleostomi</taxon>
        <taxon>Mammalia</taxon>
        <taxon>Eutheria</taxon>
        <taxon>Euarchontoglires</taxon>
        <taxon>Glires</taxon>
        <taxon>Rodentia</taxon>
        <taxon>Myomorpha</taxon>
        <taxon>Muroidea</taxon>
        <taxon>Muridae</taxon>
        <taxon>Murinae</taxon>
        <taxon>Mus</taxon>
        <taxon>Mus</taxon>
    </lineage>
</organism>
<accession>Q3THS6</accession>
<accession>Q3TL60</accession>
<accession>Q76LX3</accession>
<sequence>MNGQLNGFHEAFIEEGTFLFTSESVGEGHPDKICDQISDAVLDAHLQQDPDAKVACETVAKTGMILLAGEITSRAAIDYQKVVREAIKHIGYDDSSKGFDYKTCNVLVALEQQSPDIAQGVHLDRNEEDIGAGDQGLMFGYATDETEECMPLTIVLAHKLNAKLAELRRNGTLPWLRPDSKTQVTVQYMQDRGAVLPIRVHTIVISVQHDEEVCLDEMRDALKEKVIKAVVPAKYLDEDTIYHLQPSGRFVIGGPQGDAGLTGRKIIVDTYGGWGAHGGGAFSGKDYTKVDRSAAYAARWVAKSLVKGGLCRRVLVQVSYAIGVSHPLSISIFHYGTSQKSERELLEIVKKNFDLRPGVIVRDLDLKKPIYQRTAAYGHFGRDSFPWEVPKKLKY</sequence>
<reference key="1">
    <citation type="submission" date="2004-01" db="EMBL/GenBank/DDBJ databases">
        <title>cDNA for mouse kidney methionine adenosyltransferase II alpha.</title>
        <authorList>
            <person name="Sakata S."/>
            <person name="Okumura S."/>
        </authorList>
    </citation>
    <scope>NUCLEOTIDE SEQUENCE [MRNA]</scope>
    <source>
        <strain>ddY</strain>
        <tissue>Kidney</tissue>
    </source>
</reference>
<reference key="2">
    <citation type="journal article" date="2005" name="Science">
        <title>The transcriptional landscape of the mammalian genome.</title>
        <authorList>
            <person name="Carninci P."/>
            <person name="Kasukawa T."/>
            <person name="Katayama S."/>
            <person name="Gough J."/>
            <person name="Frith M.C."/>
            <person name="Maeda N."/>
            <person name="Oyama R."/>
            <person name="Ravasi T."/>
            <person name="Lenhard B."/>
            <person name="Wells C."/>
            <person name="Kodzius R."/>
            <person name="Shimokawa K."/>
            <person name="Bajic V.B."/>
            <person name="Brenner S.E."/>
            <person name="Batalov S."/>
            <person name="Forrest A.R."/>
            <person name="Zavolan M."/>
            <person name="Davis M.J."/>
            <person name="Wilming L.G."/>
            <person name="Aidinis V."/>
            <person name="Allen J.E."/>
            <person name="Ambesi-Impiombato A."/>
            <person name="Apweiler R."/>
            <person name="Aturaliya R.N."/>
            <person name="Bailey T.L."/>
            <person name="Bansal M."/>
            <person name="Baxter L."/>
            <person name="Beisel K.W."/>
            <person name="Bersano T."/>
            <person name="Bono H."/>
            <person name="Chalk A.M."/>
            <person name="Chiu K.P."/>
            <person name="Choudhary V."/>
            <person name="Christoffels A."/>
            <person name="Clutterbuck D.R."/>
            <person name="Crowe M.L."/>
            <person name="Dalla E."/>
            <person name="Dalrymple B.P."/>
            <person name="de Bono B."/>
            <person name="Della Gatta G."/>
            <person name="di Bernardo D."/>
            <person name="Down T."/>
            <person name="Engstrom P."/>
            <person name="Fagiolini M."/>
            <person name="Faulkner G."/>
            <person name="Fletcher C.F."/>
            <person name="Fukushima T."/>
            <person name="Furuno M."/>
            <person name="Futaki S."/>
            <person name="Gariboldi M."/>
            <person name="Georgii-Hemming P."/>
            <person name="Gingeras T.R."/>
            <person name="Gojobori T."/>
            <person name="Green R.E."/>
            <person name="Gustincich S."/>
            <person name="Harbers M."/>
            <person name="Hayashi Y."/>
            <person name="Hensch T.K."/>
            <person name="Hirokawa N."/>
            <person name="Hill D."/>
            <person name="Huminiecki L."/>
            <person name="Iacono M."/>
            <person name="Ikeo K."/>
            <person name="Iwama A."/>
            <person name="Ishikawa T."/>
            <person name="Jakt M."/>
            <person name="Kanapin A."/>
            <person name="Katoh M."/>
            <person name="Kawasawa Y."/>
            <person name="Kelso J."/>
            <person name="Kitamura H."/>
            <person name="Kitano H."/>
            <person name="Kollias G."/>
            <person name="Krishnan S.P."/>
            <person name="Kruger A."/>
            <person name="Kummerfeld S.K."/>
            <person name="Kurochkin I.V."/>
            <person name="Lareau L.F."/>
            <person name="Lazarevic D."/>
            <person name="Lipovich L."/>
            <person name="Liu J."/>
            <person name="Liuni S."/>
            <person name="McWilliam S."/>
            <person name="Madan Babu M."/>
            <person name="Madera M."/>
            <person name="Marchionni L."/>
            <person name="Matsuda H."/>
            <person name="Matsuzawa S."/>
            <person name="Miki H."/>
            <person name="Mignone F."/>
            <person name="Miyake S."/>
            <person name="Morris K."/>
            <person name="Mottagui-Tabar S."/>
            <person name="Mulder N."/>
            <person name="Nakano N."/>
            <person name="Nakauchi H."/>
            <person name="Ng P."/>
            <person name="Nilsson R."/>
            <person name="Nishiguchi S."/>
            <person name="Nishikawa S."/>
            <person name="Nori F."/>
            <person name="Ohara O."/>
            <person name="Okazaki Y."/>
            <person name="Orlando V."/>
            <person name="Pang K.C."/>
            <person name="Pavan W.J."/>
            <person name="Pavesi G."/>
            <person name="Pesole G."/>
            <person name="Petrovsky N."/>
            <person name="Piazza S."/>
            <person name="Reed J."/>
            <person name="Reid J.F."/>
            <person name="Ring B.Z."/>
            <person name="Ringwald M."/>
            <person name="Rost B."/>
            <person name="Ruan Y."/>
            <person name="Salzberg S.L."/>
            <person name="Sandelin A."/>
            <person name="Schneider C."/>
            <person name="Schoenbach C."/>
            <person name="Sekiguchi K."/>
            <person name="Semple C.A."/>
            <person name="Seno S."/>
            <person name="Sessa L."/>
            <person name="Sheng Y."/>
            <person name="Shibata Y."/>
            <person name="Shimada H."/>
            <person name="Shimada K."/>
            <person name="Silva D."/>
            <person name="Sinclair B."/>
            <person name="Sperling S."/>
            <person name="Stupka E."/>
            <person name="Sugiura K."/>
            <person name="Sultana R."/>
            <person name="Takenaka Y."/>
            <person name="Taki K."/>
            <person name="Tammoja K."/>
            <person name="Tan S.L."/>
            <person name="Tang S."/>
            <person name="Taylor M.S."/>
            <person name="Tegner J."/>
            <person name="Teichmann S.A."/>
            <person name="Ueda H.R."/>
            <person name="van Nimwegen E."/>
            <person name="Verardo R."/>
            <person name="Wei C.L."/>
            <person name="Yagi K."/>
            <person name="Yamanishi H."/>
            <person name="Zabarovsky E."/>
            <person name="Zhu S."/>
            <person name="Zimmer A."/>
            <person name="Hide W."/>
            <person name="Bult C."/>
            <person name="Grimmond S.M."/>
            <person name="Teasdale R.D."/>
            <person name="Liu E.T."/>
            <person name="Brusic V."/>
            <person name="Quackenbush J."/>
            <person name="Wahlestedt C."/>
            <person name="Mattick J.S."/>
            <person name="Hume D.A."/>
            <person name="Kai C."/>
            <person name="Sasaki D."/>
            <person name="Tomaru Y."/>
            <person name="Fukuda S."/>
            <person name="Kanamori-Katayama M."/>
            <person name="Suzuki M."/>
            <person name="Aoki J."/>
            <person name="Arakawa T."/>
            <person name="Iida J."/>
            <person name="Imamura K."/>
            <person name="Itoh M."/>
            <person name="Kato T."/>
            <person name="Kawaji H."/>
            <person name="Kawagashira N."/>
            <person name="Kawashima T."/>
            <person name="Kojima M."/>
            <person name="Kondo S."/>
            <person name="Konno H."/>
            <person name="Nakano K."/>
            <person name="Ninomiya N."/>
            <person name="Nishio T."/>
            <person name="Okada M."/>
            <person name="Plessy C."/>
            <person name="Shibata K."/>
            <person name="Shiraki T."/>
            <person name="Suzuki S."/>
            <person name="Tagami M."/>
            <person name="Waki K."/>
            <person name="Watahiki A."/>
            <person name="Okamura-Oho Y."/>
            <person name="Suzuki H."/>
            <person name="Kawai J."/>
            <person name="Hayashizaki Y."/>
        </authorList>
    </citation>
    <scope>NUCLEOTIDE SEQUENCE [LARGE SCALE MRNA]</scope>
    <source>
        <strain>C57BL/6J</strain>
        <strain>DBA/2J</strain>
    </source>
</reference>
<reference key="3">
    <citation type="journal article" date="2010" name="Cell">
        <title>A tissue-specific atlas of mouse protein phosphorylation and expression.</title>
        <authorList>
            <person name="Huttlin E.L."/>
            <person name="Jedrychowski M.P."/>
            <person name="Elias J.E."/>
            <person name="Goswami T."/>
            <person name="Rad R."/>
            <person name="Beausoleil S.A."/>
            <person name="Villen J."/>
            <person name="Haas W."/>
            <person name="Sowa M.E."/>
            <person name="Gygi S.P."/>
        </authorList>
    </citation>
    <scope>IDENTIFICATION BY MASS SPECTROMETRY [LARGE SCALE ANALYSIS]</scope>
    <source>
        <tissue>Brain</tissue>
        <tissue>Brown adipose tissue</tissue>
        <tissue>Heart</tissue>
        <tissue>Kidney</tissue>
        <tissue>Liver</tissue>
        <tissue>Lung</tissue>
        <tissue>Pancreas</tissue>
        <tissue>Spleen</tissue>
        <tissue>Testis</tissue>
    </source>
</reference>
<reference key="4">
    <citation type="journal article" date="2017" name="Cell Rep.">
        <title>S-Adenosylmethionine synthesis is regulated by selective N6-adenosine methylation and mRNA degradation involving METTL16 and YTHDC1.</title>
        <authorList>
            <person name="Shima H."/>
            <person name="Matsumoto M."/>
            <person name="Ishigami Y."/>
            <person name="Ebina M."/>
            <person name="Muto A."/>
            <person name="Sato Y."/>
            <person name="Kumagai S."/>
            <person name="Ochiai K."/>
            <person name="Suzuki T."/>
            <person name="Igarashi K."/>
        </authorList>
    </citation>
    <scope>POST-TRANSCRIPTIONAL REGULATION</scope>
</reference>
<comment type="function">
    <text evidence="2">Catalyzes the formation of S-adenosylmethionine from methionine and ATP. The reaction comprises two steps that are both catalyzed by the same enzyme: formation of S-adenosylmethionine (AdoMet) and triphosphate, and subsequent hydrolysis of the triphosphate.</text>
</comment>
<comment type="catalytic activity">
    <reaction evidence="2">
        <text>L-methionine + ATP + H2O = S-adenosyl-L-methionine + phosphate + diphosphate</text>
        <dbReference type="Rhea" id="RHEA:21080"/>
        <dbReference type="ChEBI" id="CHEBI:15377"/>
        <dbReference type="ChEBI" id="CHEBI:30616"/>
        <dbReference type="ChEBI" id="CHEBI:33019"/>
        <dbReference type="ChEBI" id="CHEBI:43474"/>
        <dbReference type="ChEBI" id="CHEBI:57844"/>
        <dbReference type="ChEBI" id="CHEBI:59789"/>
        <dbReference type="EC" id="2.5.1.6"/>
    </reaction>
</comment>
<comment type="cofactor">
    <cofactor evidence="1">
        <name>Mg(2+)</name>
        <dbReference type="ChEBI" id="CHEBI:18420"/>
    </cofactor>
    <text evidence="2">Binds 2 magnesium ions per subunit. The magnesium ions interact primarily with the substrate.</text>
</comment>
<comment type="cofactor">
    <cofactor evidence="1">
        <name>K(+)</name>
        <dbReference type="ChEBI" id="CHEBI:29103"/>
    </cofactor>
    <text evidence="2">Binds 1 potassium ion per subunit. The potassium ion interacts primarily with the substrate.</text>
</comment>
<comment type="pathway">
    <text evidence="2">Amino-acid biosynthesis; S-adenosyl-L-methionine biosynthesis; S-adenosyl-L-methionine from L-methionine: step 1/1.</text>
</comment>
<comment type="subunit">
    <text evidence="2">Heterotrimer; composed of a catalytic MAT2A homodimer that binds one regulatory MAT2B chain. Heterohexamer; composed of a central, catalytic MAT2A homotetramer flanked on either side by a regulatory MAT2B chain.</text>
</comment>
<comment type="miscellaneous">
    <text evidence="2">Protein expression is regulated by post-transcriptional regulation: in presence of S-adenosyl-L-methionine, METTL16 binds and methylates the first hairpin of the 3'-UTR region of MAT2A mRNA, preventing recognition of their 3'-splice site by U2AF1/U2AF35, thereby inhibiting splicing and protein production of S-adenosylmethionine synthase. In S-adenosyl-L-methionine-limiting conditions, METTL16 binds the 3'-UTR region of MAT2A mRNA without methylating it due to the lack of a methyl donor, preventing N6-methylation and promoting expression of MAT2A.</text>
</comment>
<comment type="similarity">
    <text evidence="4">Belongs to the AdoMet synthase family.</text>
</comment>
<comment type="caution">
    <text evidence="2 3">According to a report, N6-methylation of MAT2A affects MAT2A mRNA stability instead of preventing splicing (PubMed:29262316). However, it was later shown that N6-methylation of MAT2A transcripts prevents recognition of their 3'-splice site by U2AF1/U2AF35, thereby inhibiting splicing and protein production (By similarity).</text>
</comment>
<protein>
    <recommendedName>
        <fullName>S-adenosylmethionine synthase isoform type-2</fullName>
        <shortName>AdoMet synthase 2</shortName>
        <ecNumber evidence="2">2.5.1.6</ecNumber>
    </recommendedName>
    <alternativeName>
        <fullName>Methionine adenosyltransferase 2</fullName>
        <shortName>MAT 2</shortName>
    </alternativeName>
</protein>
<proteinExistence type="evidence at protein level"/>
<feature type="chain" id="PRO_0000174437" description="S-adenosylmethionine synthase isoform type-2">
    <location>
        <begin position="1"/>
        <end position="395"/>
    </location>
</feature>
<feature type="region of interest" description="Flexible loop" evidence="1">
    <location>
        <begin position="113"/>
        <end position="125"/>
    </location>
</feature>
<feature type="binding site" description="in other chain" evidence="2">
    <location>
        <position position="29"/>
    </location>
    <ligand>
        <name>ATP</name>
        <dbReference type="ChEBI" id="CHEBI:30616"/>
        <note>ligand shared between two neighboring subunits</note>
    </ligand>
</feature>
<feature type="binding site" evidence="2">
    <location>
        <position position="31"/>
    </location>
    <ligand>
        <name>Mg(2+)</name>
        <dbReference type="ChEBI" id="CHEBI:18420"/>
    </ligand>
</feature>
<feature type="binding site" evidence="1">
    <location>
        <position position="57"/>
    </location>
    <ligand>
        <name>K(+)</name>
        <dbReference type="ChEBI" id="CHEBI:29103"/>
    </ligand>
</feature>
<feature type="binding site" description="in other chain" evidence="2">
    <location>
        <position position="70"/>
    </location>
    <ligand>
        <name>L-methionine</name>
        <dbReference type="ChEBI" id="CHEBI:57844"/>
        <note>ligand shared between two neighboring subunits</note>
    </ligand>
</feature>
<feature type="binding site" description="in other chain" evidence="2">
    <location>
        <position position="113"/>
    </location>
    <ligand>
        <name>L-methionine</name>
        <dbReference type="ChEBI" id="CHEBI:57844"/>
        <note>ligand shared between two neighboring subunits</note>
    </ligand>
</feature>
<feature type="binding site" description="in other chain" evidence="2">
    <location>
        <begin position="179"/>
        <end position="181"/>
    </location>
    <ligand>
        <name>ATP</name>
        <dbReference type="ChEBI" id="CHEBI:30616"/>
        <note>ligand shared between two neighboring subunits</note>
    </ligand>
</feature>
<feature type="binding site" description="in other chain" evidence="2">
    <location>
        <begin position="247"/>
        <end position="250"/>
    </location>
    <ligand>
        <name>ATP</name>
        <dbReference type="ChEBI" id="CHEBI:30616"/>
        <note>ligand shared between two neighboring subunits</note>
    </ligand>
</feature>
<feature type="binding site" description="in other chain" evidence="2">
    <location>
        <position position="258"/>
    </location>
    <ligand>
        <name>ATP</name>
        <dbReference type="ChEBI" id="CHEBI:30616"/>
        <note>ligand shared between two neighboring subunits</note>
    </ligand>
</feature>
<feature type="binding site" evidence="2">
    <location>
        <position position="258"/>
    </location>
    <ligand>
        <name>L-methionine</name>
        <dbReference type="ChEBI" id="CHEBI:57844"/>
        <note>ligand shared between two neighboring subunits</note>
    </ligand>
</feature>
<feature type="binding site" description="in other chain" evidence="2">
    <location>
        <begin position="264"/>
        <end position="265"/>
    </location>
    <ligand>
        <name>ATP</name>
        <dbReference type="ChEBI" id="CHEBI:30616"/>
        <note>ligand shared between two neighboring subunits</note>
    </ligand>
</feature>
<feature type="binding site" evidence="2">
    <location>
        <position position="281"/>
    </location>
    <ligand>
        <name>ATP</name>
        <dbReference type="ChEBI" id="CHEBI:30616"/>
        <note>ligand shared between two neighboring subunits</note>
    </ligand>
</feature>
<feature type="binding site" evidence="2">
    <location>
        <position position="285"/>
    </location>
    <ligand>
        <name>ATP</name>
        <dbReference type="ChEBI" id="CHEBI:30616"/>
        <note>ligand shared between two neighboring subunits</note>
    </ligand>
</feature>
<feature type="binding site" description="in other chain" evidence="1">
    <location>
        <position position="289"/>
    </location>
    <ligand>
        <name>L-methionine</name>
        <dbReference type="ChEBI" id="CHEBI:57844"/>
        <note>ligand shared between two neighboring subunits</note>
    </ligand>
</feature>
<feature type="binding site" evidence="2">
    <location>
        <position position="291"/>
    </location>
    <ligand>
        <name>ATP</name>
        <dbReference type="ChEBI" id="CHEBI:30616"/>
        <note>ligand shared between two neighboring subunits</note>
    </ligand>
</feature>
<feature type="modified residue" description="N6-acetyllysine" evidence="2">
    <location>
        <position position="81"/>
    </location>
</feature>
<feature type="modified residue" description="Phosphoserine" evidence="2">
    <location>
        <position position="114"/>
    </location>
</feature>
<feature type="modified residue" description="Phosphoserine" evidence="2">
    <location>
        <position position="384"/>
    </location>
</feature>
<feature type="cross-link" description="Glycyl lysine isopeptide (Lys-Gly) (interchain with G-Cter in SUMO2)" evidence="2">
    <location>
        <position position="228"/>
    </location>
</feature>
<feature type="cross-link" description="Glycyl lysine isopeptide (Lys-Gly) (interchain with G-Cter in SUMO2)" evidence="2">
    <location>
        <position position="234"/>
    </location>
</feature>
<feature type="sequence conflict" description="In Ref. 2; BAE40120." evidence="4" ref="2">
    <original>S</original>
    <variation>T</variation>
    <location>
        <position position="24"/>
    </location>
</feature>
<feature type="sequence conflict" description="In Ref. 1; BAD06937." evidence="4" ref="1">
    <original>E</original>
    <variation>G</variation>
    <location>
        <position position="128"/>
    </location>
</feature>
<feature type="sequence conflict" description="In Ref. 2; BAE38932." evidence="4" ref="2">
    <original>S</original>
    <variation>L</variation>
    <location>
        <position position="283"/>
    </location>
</feature>
<feature type="sequence conflict" description="In Ref. 2; BAE40120." evidence="4" ref="2">
    <original>A</original>
    <variation>S</variation>
    <location>
        <position position="302"/>
    </location>
</feature>
<name>METK2_MOUSE</name>
<gene>
    <name type="primary">Mat2a</name>
</gene>